<reference key="1">
    <citation type="journal article" date="2009" name="J. Bacteriol.">
        <title>Complete and draft genome sequences of six members of the Aquificales.</title>
        <authorList>
            <person name="Reysenbach A.-L."/>
            <person name="Hamamura N."/>
            <person name="Podar M."/>
            <person name="Griffiths E."/>
            <person name="Ferreira S."/>
            <person name="Hochstein R."/>
            <person name="Heidelberg J."/>
            <person name="Johnson J."/>
            <person name="Mead D."/>
            <person name="Pohorille A."/>
            <person name="Sarmiento M."/>
            <person name="Schweighofer K."/>
            <person name="Seshadri R."/>
            <person name="Voytek M.A."/>
        </authorList>
    </citation>
    <scope>NUCLEOTIDE SEQUENCE [LARGE SCALE GENOMIC DNA]</scope>
    <source>
        <strain>DSM 14350 / EX-H1</strain>
    </source>
</reference>
<proteinExistence type="inferred from homology"/>
<name>GLYA_PERMH</name>
<gene>
    <name evidence="1" type="primary">glyA</name>
    <name type="ordered locus">PERMA_1104</name>
</gene>
<protein>
    <recommendedName>
        <fullName evidence="1">Serine hydroxymethyltransferase</fullName>
        <shortName evidence="1">SHMT</shortName>
        <shortName evidence="1">Serine methylase</shortName>
        <ecNumber evidence="1">2.1.2.1</ecNumber>
    </recommendedName>
</protein>
<accession>C0QQE4</accession>
<sequence length="420" mass="46650">MLKHLKQVDQEVFEAVSKEFKRQQEHLEMIASENYTSYAVMEAQGSVLTNKYAEGLPHKRYYGGCEYVDIVEDLAIERLKKIYGAEHANVQPHSGSQANQAVYFSQLQAGDTIMGMSLAHGGHLTHGAKVNLSGIVFNAVQYGVNPETELIDYDQVYKLAKEHKPKMIVAGASAYSRIIDWAKFREIADEVGALLMVDMAHYAGLIAGGAYPSPVPYADFVTSTTHKTLRGPRGGFILSKAQYGKDIDKWVFPRLQGGPLMHVIAAKAVAFKEAMTEEFREYAHQTVKNAKVLAEELKAEGLRIVSGGTDSHIVLVDLRPLNVKGNQAEEALGRANITVNKNAIPFDPEKPMVTSGIRLGTAALTTRGMKENDMRRIAKNIVKVLKNLDNEKIIQEVKDDVLSLCSSYPLYPEWTEYYLD</sequence>
<comment type="function">
    <text evidence="1">Catalyzes the reversible interconversion of serine and glycine with tetrahydrofolate (THF) serving as the one-carbon carrier. This reaction serves as the major source of one-carbon groups required for the biosynthesis of purines, thymidylate, methionine, and other important biomolecules. Also exhibits THF-independent aldolase activity toward beta-hydroxyamino acids, producing glycine and aldehydes, via a retro-aldol mechanism.</text>
</comment>
<comment type="catalytic activity">
    <reaction evidence="1">
        <text>(6R)-5,10-methylene-5,6,7,8-tetrahydrofolate + glycine + H2O = (6S)-5,6,7,8-tetrahydrofolate + L-serine</text>
        <dbReference type="Rhea" id="RHEA:15481"/>
        <dbReference type="ChEBI" id="CHEBI:15377"/>
        <dbReference type="ChEBI" id="CHEBI:15636"/>
        <dbReference type="ChEBI" id="CHEBI:33384"/>
        <dbReference type="ChEBI" id="CHEBI:57305"/>
        <dbReference type="ChEBI" id="CHEBI:57453"/>
        <dbReference type="EC" id="2.1.2.1"/>
    </reaction>
</comment>
<comment type="cofactor">
    <cofactor evidence="1">
        <name>pyridoxal 5'-phosphate</name>
        <dbReference type="ChEBI" id="CHEBI:597326"/>
    </cofactor>
</comment>
<comment type="pathway">
    <text evidence="1">One-carbon metabolism; tetrahydrofolate interconversion.</text>
</comment>
<comment type="pathway">
    <text evidence="1">Amino-acid biosynthesis; glycine biosynthesis; glycine from L-serine: step 1/1.</text>
</comment>
<comment type="subunit">
    <text evidence="1">Homodimer.</text>
</comment>
<comment type="subcellular location">
    <subcellularLocation>
        <location evidence="1">Cytoplasm</location>
    </subcellularLocation>
</comment>
<comment type="similarity">
    <text evidence="1">Belongs to the SHMT family.</text>
</comment>
<organism>
    <name type="scientific">Persephonella marina (strain DSM 14350 / EX-H1)</name>
    <dbReference type="NCBI Taxonomy" id="123214"/>
    <lineage>
        <taxon>Bacteria</taxon>
        <taxon>Pseudomonadati</taxon>
        <taxon>Aquificota</taxon>
        <taxon>Aquificia</taxon>
        <taxon>Aquificales</taxon>
        <taxon>Hydrogenothermaceae</taxon>
        <taxon>Persephonella</taxon>
    </lineage>
</organism>
<keyword id="KW-0028">Amino-acid biosynthesis</keyword>
<keyword id="KW-0963">Cytoplasm</keyword>
<keyword id="KW-0554">One-carbon metabolism</keyword>
<keyword id="KW-0663">Pyridoxal phosphate</keyword>
<keyword id="KW-1185">Reference proteome</keyword>
<keyword id="KW-0808">Transferase</keyword>
<feature type="chain" id="PRO_1000117645" description="Serine hydroxymethyltransferase">
    <location>
        <begin position="1"/>
        <end position="420"/>
    </location>
</feature>
<feature type="binding site" evidence="1">
    <location>
        <position position="118"/>
    </location>
    <ligand>
        <name>(6S)-5,6,7,8-tetrahydrofolate</name>
        <dbReference type="ChEBI" id="CHEBI:57453"/>
    </ligand>
</feature>
<feature type="binding site" evidence="1">
    <location>
        <begin position="122"/>
        <end position="124"/>
    </location>
    <ligand>
        <name>(6S)-5,6,7,8-tetrahydrofolate</name>
        <dbReference type="ChEBI" id="CHEBI:57453"/>
    </ligand>
</feature>
<feature type="site" description="Plays an important role in substrate specificity" evidence="1">
    <location>
        <position position="226"/>
    </location>
</feature>
<feature type="modified residue" description="N6-(pyridoxal phosphate)lysine" evidence="1">
    <location>
        <position position="227"/>
    </location>
</feature>
<dbReference type="EC" id="2.1.2.1" evidence="1"/>
<dbReference type="EMBL" id="CP001230">
    <property type="protein sequence ID" value="ACO03855.1"/>
    <property type="molecule type" value="Genomic_DNA"/>
</dbReference>
<dbReference type="RefSeq" id="WP_012676094.1">
    <property type="nucleotide sequence ID" value="NC_012440.1"/>
</dbReference>
<dbReference type="SMR" id="C0QQE4"/>
<dbReference type="STRING" id="123214.PERMA_1104"/>
<dbReference type="PaxDb" id="123214-PERMA_1104"/>
<dbReference type="KEGG" id="pmx:PERMA_1104"/>
<dbReference type="eggNOG" id="COG0112">
    <property type="taxonomic scope" value="Bacteria"/>
</dbReference>
<dbReference type="HOGENOM" id="CLU_022477_2_1_0"/>
<dbReference type="OrthoDB" id="9803846at2"/>
<dbReference type="UniPathway" id="UPA00193"/>
<dbReference type="UniPathway" id="UPA00288">
    <property type="reaction ID" value="UER01023"/>
</dbReference>
<dbReference type="Proteomes" id="UP000001366">
    <property type="component" value="Chromosome"/>
</dbReference>
<dbReference type="GO" id="GO:0005829">
    <property type="term" value="C:cytosol"/>
    <property type="evidence" value="ECO:0007669"/>
    <property type="project" value="TreeGrafter"/>
</dbReference>
<dbReference type="GO" id="GO:0004372">
    <property type="term" value="F:glycine hydroxymethyltransferase activity"/>
    <property type="evidence" value="ECO:0007669"/>
    <property type="project" value="UniProtKB-UniRule"/>
</dbReference>
<dbReference type="GO" id="GO:0030170">
    <property type="term" value="F:pyridoxal phosphate binding"/>
    <property type="evidence" value="ECO:0007669"/>
    <property type="project" value="UniProtKB-UniRule"/>
</dbReference>
<dbReference type="GO" id="GO:0019264">
    <property type="term" value="P:glycine biosynthetic process from serine"/>
    <property type="evidence" value="ECO:0007669"/>
    <property type="project" value="UniProtKB-UniRule"/>
</dbReference>
<dbReference type="GO" id="GO:0035999">
    <property type="term" value="P:tetrahydrofolate interconversion"/>
    <property type="evidence" value="ECO:0007669"/>
    <property type="project" value="UniProtKB-UniRule"/>
</dbReference>
<dbReference type="CDD" id="cd00378">
    <property type="entry name" value="SHMT"/>
    <property type="match status" value="1"/>
</dbReference>
<dbReference type="FunFam" id="3.40.640.10:FF:000001">
    <property type="entry name" value="Serine hydroxymethyltransferase"/>
    <property type="match status" value="1"/>
</dbReference>
<dbReference type="FunFam" id="3.90.1150.10:FF:000003">
    <property type="entry name" value="Serine hydroxymethyltransferase"/>
    <property type="match status" value="1"/>
</dbReference>
<dbReference type="Gene3D" id="3.90.1150.10">
    <property type="entry name" value="Aspartate Aminotransferase, domain 1"/>
    <property type="match status" value="1"/>
</dbReference>
<dbReference type="Gene3D" id="3.40.640.10">
    <property type="entry name" value="Type I PLP-dependent aspartate aminotransferase-like (Major domain)"/>
    <property type="match status" value="1"/>
</dbReference>
<dbReference type="HAMAP" id="MF_00051">
    <property type="entry name" value="SHMT"/>
    <property type="match status" value="1"/>
</dbReference>
<dbReference type="InterPro" id="IPR015424">
    <property type="entry name" value="PyrdxlP-dep_Trfase"/>
</dbReference>
<dbReference type="InterPro" id="IPR015421">
    <property type="entry name" value="PyrdxlP-dep_Trfase_major"/>
</dbReference>
<dbReference type="InterPro" id="IPR015422">
    <property type="entry name" value="PyrdxlP-dep_Trfase_small"/>
</dbReference>
<dbReference type="InterPro" id="IPR001085">
    <property type="entry name" value="Ser_HO-MeTrfase"/>
</dbReference>
<dbReference type="InterPro" id="IPR049943">
    <property type="entry name" value="Ser_HO-MeTrfase-like"/>
</dbReference>
<dbReference type="InterPro" id="IPR019798">
    <property type="entry name" value="Ser_HO-MeTrfase_PLP_BS"/>
</dbReference>
<dbReference type="InterPro" id="IPR039429">
    <property type="entry name" value="SHMT-like_dom"/>
</dbReference>
<dbReference type="NCBIfam" id="NF000586">
    <property type="entry name" value="PRK00011.1"/>
    <property type="match status" value="1"/>
</dbReference>
<dbReference type="PANTHER" id="PTHR11680">
    <property type="entry name" value="SERINE HYDROXYMETHYLTRANSFERASE"/>
    <property type="match status" value="1"/>
</dbReference>
<dbReference type="PANTHER" id="PTHR11680:SF35">
    <property type="entry name" value="SERINE HYDROXYMETHYLTRANSFERASE 1"/>
    <property type="match status" value="1"/>
</dbReference>
<dbReference type="Pfam" id="PF00464">
    <property type="entry name" value="SHMT"/>
    <property type="match status" value="1"/>
</dbReference>
<dbReference type="PIRSF" id="PIRSF000412">
    <property type="entry name" value="SHMT"/>
    <property type="match status" value="1"/>
</dbReference>
<dbReference type="SUPFAM" id="SSF53383">
    <property type="entry name" value="PLP-dependent transferases"/>
    <property type="match status" value="1"/>
</dbReference>
<dbReference type="PROSITE" id="PS00096">
    <property type="entry name" value="SHMT"/>
    <property type="match status" value="1"/>
</dbReference>
<evidence type="ECO:0000255" key="1">
    <source>
        <dbReference type="HAMAP-Rule" id="MF_00051"/>
    </source>
</evidence>